<gene>
    <name type="primary">Gng8</name>
    <name type="synonym">Gng9</name>
    <name type="synonym">Gngt9</name>
</gene>
<evidence type="ECO:0000250" key="1"/>
<evidence type="ECO:0000269" key="2">
    <source>
    </source>
</evidence>
<evidence type="ECO:0000305" key="3"/>
<sequence>MSNNMAKIAEARKTVEQLKLEVNIDRMKVSQAAAELLAFCETHAKDDPLVTPVPAAENPFRDKRLFCTLL</sequence>
<feature type="chain" id="PRO_0000012653" description="Guanine nucleotide-binding protein G(I)/G(S)/G(O) subunit gamma-8">
    <location>
        <begin position="1"/>
        <end position="67"/>
    </location>
</feature>
<feature type="propeptide" id="PRO_0000012654" description="Removed in mature form" evidence="1">
    <location>
        <begin position="68"/>
        <end position="70"/>
    </location>
</feature>
<feature type="modified residue" description="Cysteine methyl ester" evidence="1">
    <location>
        <position position="67"/>
    </location>
</feature>
<feature type="lipid moiety-binding region" description="S-geranylgeranyl cysteine" evidence="1">
    <location>
        <position position="67"/>
    </location>
</feature>
<organism>
    <name type="scientific">Rattus norvegicus</name>
    <name type="common">Rat</name>
    <dbReference type="NCBI Taxonomy" id="10116"/>
    <lineage>
        <taxon>Eukaryota</taxon>
        <taxon>Metazoa</taxon>
        <taxon>Chordata</taxon>
        <taxon>Craniata</taxon>
        <taxon>Vertebrata</taxon>
        <taxon>Euteleostomi</taxon>
        <taxon>Mammalia</taxon>
        <taxon>Eutheria</taxon>
        <taxon>Euarchontoglires</taxon>
        <taxon>Glires</taxon>
        <taxon>Rodentia</taxon>
        <taxon>Myomorpha</taxon>
        <taxon>Muroidea</taxon>
        <taxon>Muridae</taxon>
        <taxon>Murinae</taxon>
        <taxon>Rattus</taxon>
    </lineage>
</organism>
<reference key="1">
    <citation type="journal article" date="1995" name="J. Biol. Chem.">
        <title>A novel GTP-binding protein gamma-subunit, G gamma 8, is expressed during neurogenesis in the olfactory and vomeronasal neuroepithelia.</title>
        <authorList>
            <person name="Ryba N.J.P."/>
            <person name="Tirindelli R."/>
        </authorList>
    </citation>
    <scope>NUCLEOTIDE SEQUENCE [MRNA]</scope>
    <scope>FUNCTION</scope>
    <scope>TISSUE SPECIFICITY</scope>
    <scope>DEVELOPMENTAL STAGE</scope>
    <source>
        <strain>Wistar</strain>
        <tissue>Olfactory epithelium</tissue>
    </source>
</reference>
<protein>
    <recommendedName>
        <fullName>Guanine nucleotide-binding protein G(I)/G(S)/G(O) subunit gamma-8</fullName>
    </recommendedName>
    <alternativeName>
        <fullName>Gamma-9</fullName>
    </alternativeName>
</protein>
<name>GBG8_RAT</name>
<proteinExistence type="evidence at transcript level"/>
<comment type="function">
    <text evidence="2">Guanine nucleotide-binding proteins (G proteins) are involved as a modulator or transducer in various transmembrane signaling systems. The beta and gamma chains are required for the GTPase activity, for replacement of GDP by GTP, and for G protein-effector interaction. This subunit may have a very specific role in the development and turnover of olfactory and vomeronasal neurons.</text>
</comment>
<comment type="subunit">
    <text>G proteins are composed of 3 units, alpha, beta and gamma.</text>
</comment>
<comment type="subcellular location">
    <subcellularLocation>
        <location evidence="3">Cell membrane</location>
        <topology evidence="3">Lipid-anchor</topology>
        <orientation evidence="3">Cytoplasmic side</orientation>
    </subcellularLocation>
</comment>
<comment type="tissue specificity">
    <text evidence="2">Detected in the olfactory epithelium, the vomeronasal epithelium and, to a lesser extent, the olfactory bulb.</text>
</comment>
<comment type="developmental stage">
    <text evidence="2">During development, expression in the olfactory epithelium parallels neurogenesis, peaking shortly after birth and declining in the adult.</text>
</comment>
<comment type="similarity">
    <text evidence="3">Belongs to the G protein gamma family.</text>
</comment>
<accession>P63077</accession>
<accession>P43426</accession>
<dbReference type="EMBL" id="L35921">
    <property type="protein sequence ID" value="AAA73553.1"/>
    <property type="molecule type" value="mRNA"/>
</dbReference>
<dbReference type="PIR" id="A56181">
    <property type="entry name" value="A56181"/>
</dbReference>
<dbReference type="RefSeq" id="NP_631924.1">
    <property type="nucleotide sequence ID" value="NM_139185.2"/>
</dbReference>
<dbReference type="RefSeq" id="XP_006228446.1">
    <property type="nucleotide sequence ID" value="XM_006228384.5"/>
</dbReference>
<dbReference type="RefSeq" id="XP_006228447.1">
    <property type="nucleotide sequence ID" value="XM_006228385.3"/>
</dbReference>
<dbReference type="RefSeq" id="XP_038954727.1">
    <property type="nucleotide sequence ID" value="XM_039098799.2"/>
</dbReference>
<dbReference type="SMR" id="P63077"/>
<dbReference type="FunCoup" id="P63077">
    <property type="interactions" value="1176"/>
</dbReference>
<dbReference type="STRING" id="10116.ENSRNOP00000072099"/>
<dbReference type="PaxDb" id="10116-ENSRNOP00000022441"/>
<dbReference type="Ensembl" id="ENSRNOT00000090417.2">
    <property type="protein sequence ID" value="ENSRNOP00000072099.1"/>
    <property type="gene ID" value="ENSRNOG00000016701.8"/>
</dbReference>
<dbReference type="GeneID" id="245986"/>
<dbReference type="KEGG" id="rno:245986"/>
<dbReference type="UCSC" id="RGD:620808">
    <property type="organism name" value="rat"/>
</dbReference>
<dbReference type="AGR" id="RGD:620808"/>
<dbReference type="CTD" id="94235"/>
<dbReference type="RGD" id="620808">
    <property type="gene designation" value="Gng8"/>
</dbReference>
<dbReference type="eggNOG" id="KOG4119">
    <property type="taxonomic scope" value="Eukaryota"/>
</dbReference>
<dbReference type="GeneTree" id="ENSGT01100000263497"/>
<dbReference type="InParanoid" id="P63077"/>
<dbReference type="PhylomeDB" id="P63077"/>
<dbReference type="TreeFam" id="TF319909"/>
<dbReference type="Reactome" id="R-RNO-1296041">
    <property type="pathway name" value="Activation of G protein gated Potassium channels"/>
</dbReference>
<dbReference type="Reactome" id="R-RNO-202040">
    <property type="pathway name" value="G-protein activation"/>
</dbReference>
<dbReference type="Reactome" id="R-RNO-381676">
    <property type="pathway name" value="Glucagon-like Peptide-1 (GLP1) regulates insulin secretion"/>
</dbReference>
<dbReference type="Reactome" id="R-RNO-392170">
    <property type="pathway name" value="ADP signalling through P2Y purinoceptor 12"/>
</dbReference>
<dbReference type="Reactome" id="R-RNO-392451">
    <property type="pathway name" value="G beta:gamma signalling through PI3Kgamma"/>
</dbReference>
<dbReference type="Reactome" id="R-RNO-400042">
    <property type="pathway name" value="Adrenaline,noradrenaline inhibits insulin secretion"/>
</dbReference>
<dbReference type="Reactome" id="R-RNO-4086398">
    <property type="pathway name" value="Ca2+ pathway"/>
</dbReference>
<dbReference type="Reactome" id="R-RNO-416476">
    <property type="pathway name" value="G alpha (q) signalling events"/>
</dbReference>
<dbReference type="Reactome" id="R-RNO-418594">
    <property type="pathway name" value="G alpha (i) signalling events"/>
</dbReference>
<dbReference type="Reactome" id="R-RNO-418597">
    <property type="pathway name" value="G alpha (z) signalling events"/>
</dbReference>
<dbReference type="Reactome" id="R-RNO-420092">
    <property type="pathway name" value="Glucagon-type ligand receptors"/>
</dbReference>
<dbReference type="Reactome" id="R-RNO-428930">
    <property type="pathway name" value="Thromboxane signalling through TP receptor"/>
</dbReference>
<dbReference type="Reactome" id="R-RNO-432040">
    <property type="pathway name" value="Vasopressin regulates renal water homeostasis via Aquaporins"/>
</dbReference>
<dbReference type="Reactome" id="R-RNO-456926">
    <property type="pathway name" value="Thrombin signalling through proteinase activated receptors (PARs)"/>
</dbReference>
<dbReference type="Reactome" id="R-RNO-8964616">
    <property type="pathway name" value="G beta:gamma signalling through CDC42"/>
</dbReference>
<dbReference type="Reactome" id="R-RNO-9856530">
    <property type="pathway name" value="High laminar flow shear stress activates signaling by PIEZO1 and PECAM1:CDH5:KDR in endothelial cells"/>
</dbReference>
<dbReference type="Reactome" id="R-RNO-997272">
    <property type="pathway name" value="Inhibition of voltage gated Ca2+ channels via Gbeta/gamma subunits"/>
</dbReference>
<dbReference type="PRO" id="PR:P63077"/>
<dbReference type="Proteomes" id="UP000002494">
    <property type="component" value="Chromosome 1"/>
</dbReference>
<dbReference type="Bgee" id="ENSRNOG00000016701">
    <property type="expression patterns" value="Expressed in lung and 20 other cell types or tissues"/>
</dbReference>
<dbReference type="GO" id="GO:0005834">
    <property type="term" value="C:heterotrimeric G-protein complex"/>
    <property type="evidence" value="ECO:0000318"/>
    <property type="project" value="GO_Central"/>
</dbReference>
<dbReference type="GO" id="GO:0031681">
    <property type="term" value="F:G-protein beta-subunit binding"/>
    <property type="evidence" value="ECO:0000318"/>
    <property type="project" value="GO_Central"/>
</dbReference>
<dbReference type="GO" id="GO:0071444">
    <property type="term" value="P:cellular response to pheromone"/>
    <property type="evidence" value="ECO:0000266"/>
    <property type="project" value="RGD"/>
</dbReference>
<dbReference type="GO" id="GO:0007186">
    <property type="term" value="P:G protein-coupled receptor signaling pathway"/>
    <property type="evidence" value="ECO:0000318"/>
    <property type="project" value="GO_Central"/>
</dbReference>
<dbReference type="GO" id="GO:0007399">
    <property type="term" value="P:nervous system development"/>
    <property type="evidence" value="ECO:0000270"/>
    <property type="project" value="RGD"/>
</dbReference>
<dbReference type="GO" id="GO:0043584">
    <property type="term" value="P:nose development"/>
    <property type="evidence" value="ECO:0000266"/>
    <property type="project" value="RGD"/>
</dbReference>
<dbReference type="GO" id="GO:0035176">
    <property type="term" value="P:social behavior"/>
    <property type="evidence" value="ECO:0000266"/>
    <property type="project" value="RGD"/>
</dbReference>
<dbReference type="CDD" id="cd00068">
    <property type="entry name" value="GGL"/>
    <property type="match status" value="1"/>
</dbReference>
<dbReference type="FunFam" id="4.10.260.10:FF:000001">
    <property type="entry name" value="Guanine nucleotide-binding protein subunit gamma"/>
    <property type="match status" value="1"/>
</dbReference>
<dbReference type="Gene3D" id="4.10.260.10">
    <property type="entry name" value="Transducin (heterotrimeric G protein), gamma chain"/>
    <property type="match status" value="1"/>
</dbReference>
<dbReference type="InterPro" id="IPR015898">
    <property type="entry name" value="G-protein_gamma-like_dom"/>
</dbReference>
<dbReference type="InterPro" id="IPR036284">
    <property type="entry name" value="GGL_sf"/>
</dbReference>
<dbReference type="InterPro" id="IPR001770">
    <property type="entry name" value="Gprotein-gamma"/>
</dbReference>
<dbReference type="PANTHER" id="PTHR13809">
    <property type="entry name" value="GUANINE NUCLEOTIDE-BINDING PROTEIN GAMMA SUBUNIT"/>
    <property type="match status" value="1"/>
</dbReference>
<dbReference type="Pfam" id="PF00631">
    <property type="entry name" value="G-gamma"/>
    <property type="match status" value="1"/>
</dbReference>
<dbReference type="PRINTS" id="PR00321">
    <property type="entry name" value="GPROTEING"/>
</dbReference>
<dbReference type="SMART" id="SM01224">
    <property type="entry name" value="G_gamma"/>
    <property type="match status" value="1"/>
</dbReference>
<dbReference type="SMART" id="SM00224">
    <property type="entry name" value="GGL"/>
    <property type="match status" value="1"/>
</dbReference>
<dbReference type="SUPFAM" id="SSF48670">
    <property type="entry name" value="Transducin (heterotrimeric G protein), gamma chain"/>
    <property type="match status" value="1"/>
</dbReference>
<dbReference type="PROSITE" id="PS50058">
    <property type="entry name" value="G_PROTEIN_GAMMA"/>
    <property type="match status" value="1"/>
</dbReference>
<keyword id="KW-1003">Cell membrane</keyword>
<keyword id="KW-0449">Lipoprotein</keyword>
<keyword id="KW-0472">Membrane</keyword>
<keyword id="KW-0488">Methylation</keyword>
<keyword id="KW-0636">Prenylation</keyword>
<keyword id="KW-1185">Reference proteome</keyword>
<keyword id="KW-0807">Transducer</keyword>